<proteinExistence type="inferred from homology"/>
<gene>
    <name type="primary">rps4</name>
    <name type="ordered locus">Poptr_cp024</name>
</gene>
<organism>
    <name type="scientific">Populus trichocarpa</name>
    <name type="common">Western balsam poplar</name>
    <name type="synonym">Populus balsamifera subsp. trichocarpa</name>
    <dbReference type="NCBI Taxonomy" id="3694"/>
    <lineage>
        <taxon>Eukaryota</taxon>
        <taxon>Viridiplantae</taxon>
        <taxon>Streptophyta</taxon>
        <taxon>Embryophyta</taxon>
        <taxon>Tracheophyta</taxon>
        <taxon>Spermatophyta</taxon>
        <taxon>Magnoliopsida</taxon>
        <taxon>eudicotyledons</taxon>
        <taxon>Gunneridae</taxon>
        <taxon>Pentapetalae</taxon>
        <taxon>rosids</taxon>
        <taxon>fabids</taxon>
        <taxon>Malpighiales</taxon>
        <taxon>Salicaceae</taxon>
        <taxon>Saliceae</taxon>
        <taxon>Populus</taxon>
    </lineage>
</organism>
<dbReference type="EMBL" id="EF489041">
    <property type="protein sequence ID" value="ABO36706.1"/>
    <property type="molecule type" value="Genomic_DNA"/>
</dbReference>
<dbReference type="RefSeq" id="YP_001109503.1">
    <property type="nucleotide sequence ID" value="NC_009143.1"/>
</dbReference>
<dbReference type="SMR" id="A4GYR2"/>
<dbReference type="FunCoup" id="A4GYR2">
    <property type="interactions" value="308"/>
</dbReference>
<dbReference type="STRING" id="3694.A4GYR2"/>
<dbReference type="EnsemblPlants" id="Potri.013G163300.1.v4.1">
    <property type="protein sequence ID" value="Potri.013G163300.1.v4.1"/>
    <property type="gene ID" value="Potri.013G163300.v4.1"/>
</dbReference>
<dbReference type="GeneID" id="4929666"/>
<dbReference type="Gramene" id="Potri.013G163300.1.v4.1">
    <property type="protein sequence ID" value="Potri.013G163300.1.v4.1"/>
    <property type="gene ID" value="Potri.013G163300.v4.1"/>
</dbReference>
<dbReference type="KEGG" id="pop:4929666"/>
<dbReference type="InParanoid" id="A4GYR2"/>
<dbReference type="OMA" id="QLVVELY"/>
<dbReference type="OrthoDB" id="2443at2759"/>
<dbReference type="Proteomes" id="UP000006729">
    <property type="component" value="Chloroplast"/>
</dbReference>
<dbReference type="GO" id="GO:0009507">
    <property type="term" value="C:chloroplast"/>
    <property type="evidence" value="ECO:0007669"/>
    <property type="project" value="UniProtKB-SubCell"/>
</dbReference>
<dbReference type="GO" id="GO:0015935">
    <property type="term" value="C:small ribosomal subunit"/>
    <property type="evidence" value="ECO:0000318"/>
    <property type="project" value="GO_Central"/>
</dbReference>
<dbReference type="GO" id="GO:0019843">
    <property type="term" value="F:rRNA binding"/>
    <property type="evidence" value="ECO:0000318"/>
    <property type="project" value="GO_Central"/>
</dbReference>
<dbReference type="GO" id="GO:0003735">
    <property type="term" value="F:structural constituent of ribosome"/>
    <property type="evidence" value="ECO:0000318"/>
    <property type="project" value="GO_Central"/>
</dbReference>
<dbReference type="GO" id="GO:0042274">
    <property type="term" value="P:ribosomal small subunit biogenesis"/>
    <property type="evidence" value="ECO:0000318"/>
    <property type="project" value="GO_Central"/>
</dbReference>
<dbReference type="GO" id="GO:0006412">
    <property type="term" value="P:translation"/>
    <property type="evidence" value="ECO:0007669"/>
    <property type="project" value="UniProtKB-UniRule"/>
</dbReference>
<dbReference type="CDD" id="cd00165">
    <property type="entry name" value="S4"/>
    <property type="match status" value="1"/>
</dbReference>
<dbReference type="FunFam" id="1.10.1050.10:FF:000002">
    <property type="entry name" value="30S ribosomal protein S4, chloroplastic"/>
    <property type="match status" value="1"/>
</dbReference>
<dbReference type="FunFam" id="3.10.290.10:FF:000081">
    <property type="entry name" value="30S ribosomal protein S4, chloroplastic"/>
    <property type="match status" value="1"/>
</dbReference>
<dbReference type="Gene3D" id="1.10.1050.10">
    <property type="entry name" value="Ribosomal Protein S4 Delta 41, Chain A, domain 1"/>
    <property type="match status" value="1"/>
</dbReference>
<dbReference type="Gene3D" id="3.10.290.10">
    <property type="entry name" value="RNA-binding S4 domain"/>
    <property type="match status" value="1"/>
</dbReference>
<dbReference type="HAMAP" id="MF_01306_B">
    <property type="entry name" value="Ribosomal_uS4_B"/>
    <property type="match status" value="1"/>
</dbReference>
<dbReference type="InterPro" id="IPR022801">
    <property type="entry name" value="Ribosomal_uS4"/>
</dbReference>
<dbReference type="InterPro" id="IPR005709">
    <property type="entry name" value="Ribosomal_uS4_bac-type"/>
</dbReference>
<dbReference type="InterPro" id="IPR018079">
    <property type="entry name" value="Ribosomal_uS4_CS"/>
</dbReference>
<dbReference type="InterPro" id="IPR001912">
    <property type="entry name" value="Ribosomal_uS4_N"/>
</dbReference>
<dbReference type="InterPro" id="IPR002942">
    <property type="entry name" value="S4_RNA-bd"/>
</dbReference>
<dbReference type="InterPro" id="IPR036986">
    <property type="entry name" value="S4_RNA-bd_sf"/>
</dbReference>
<dbReference type="NCBIfam" id="NF003717">
    <property type="entry name" value="PRK05327.1"/>
    <property type="match status" value="1"/>
</dbReference>
<dbReference type="NCBIfam" id="TIGR01017">
    <property type="entry name" value="rpsD_bact"/>
    <property type="match status" value="1"/>
</dbReference>
<dbReference type="PANTHER" id="PTHR11831">
    <property type="entry name" value="30S 40S RIBOSOMAL PROTEIN"/>
    <property type="match status" value="1"/>
</dbReference>
<dbReference type="PANTHER" id="PTHR11831:SF4">
    <property type="entry name" value="SMALL RIBOSOMAL SUBUNIT PROTEIN US4M"/>
    <property type="match status" value="1"/>
</dbReference>
<dbReference type="Pfam" id="PF00163">
    <property type="entry name" value="Ribosomal_S4"/>
    <property type="match status" value="1"/>
</dbReference>
<dbReference type="Pfam" id="PF01479">
    <property type="entry name" value="S4"/>
    <property type="match status" value="1"/>
</dbReference>
<dbReference type="SMART" id="SM01390">
    <property type="entry name" value="Ribosomal_S4"/>
    <property type="match status" value="1"/>
</dbReference>
<dbReference type="SMART" id="SM00363">
    <property type="entry name" value="S4"/>
    <property type="match status" value="1"/>
</dbReference>
<dbReference type="SUPFAM" id="SSF55174">
    <property type="entry name" value="Alpha-L RNA-binding motif"/>
    <property type="match status" value="1"/>
</dbReference>
<dbReference type="PROSITE" id="PS00632">
    <property type="entry name" value="RIBOSOMAL_S4"/>
    <property type="match status" value="1"/>
</dbReference>
<dbReference type="PROSITE" id="PS50889">
    <property type="entry name" value="S4"/>
    <property type="match status" value="1"/>
</dbReference>
<keyword id="KW-0150">Chloroplast</keyword>
<keyword id="KW-0934">Plastid</keyword>
<keyword id="KW-1185">Reference proteome</keyword>
<keyword id="KW-0687">Ribonucleoprotein</keyword>
<keyword id="KW-0689">Ribosomal protein</keyword>
<keyword id="KW-0694">RNA-binding</keyword>
<keyword id="KW-0699">rRNA-binding</keyword>
<geneLocation type="chloroplast"/>
<reference key="1">
    <citation type="journal article" date="2006" name="Science">
        <title>The genome of black cottonwood, Populus trichocarpa (Torr. &amp; Gray).</title>
        <authorList>
            <person name="Tuskan G.A."/>
            <person name="Difazio S."/>
            <person name="Jansson S."/>
            <person name="Bohlmann J."/>
            <person name="Grigoriev I."/>
            <person name="Hellsten U."/>
            <person name="Putnam N."/>
            <person name="Ralph S."/>
            <person name="Rombauts S."/>
            <person name="Salamov A."/>
            <person name="Schein J."/>
            <person name="Sterck L."/>
            <person name="Aerts A."/>
            <person name="Bhalerao R.R."/>
            <person name="Bhalerao R.P."/>
            <person name="Blaudez D."/>
            <person name="Boerjan W."/>
            <person name="Brun A."/>
            <person name="Brunner A."/>
            <person name="Busov V."/>
            <person name="Campbell M."/>
            <person name="Carlson J."/>
            <person name="Chalot M."/>
            <person name="Chapman J."/>
            <person name="Chen G.-L."/>
            <person name="Cooper D."/>
            <person name="Coutinho P.M."/>
            <person name="Couturier J."/>
            <person name="Covert S."/>
            <person name="Cronk Q."/>
            <person name="Cunningham R."/>
            <person name="Davis J."/>
            <person name="Degroeve S."/>
            <person name="Dejardin A."/>
            <person name="dePamphilis C.W."/>
            <person name="Detter J."/>
            <person name="Dirks B."/>
            <person name="Dubchak I."/>
            <person name="Duplessis S."/>
            <person name="Ehlting J."/>
            <person name="Ellis B."/>
            <person name="Gendler K."/>
            <person name="Goodstein D."/>
            <person name="Gribskov M."/>
            <person name="Grimwood J."/>
            <person name="Groover A."/>
            <person name="Gunter L."/>
            <person name="Hamberger B."/>
            <person name="Heinze B."/>
            <person name="Helariutta Y."/>
            <person name="Henrissat B."/>
            <person name="Holligan D."/>
            <person name="Holt R."/>
            <person name="Huang W."/>
            <person name="Islam-Faridi N."/>
            <person name="Jones S."/>
            <person name="Jones-Rhoades M."/>
            <person name="Jorgensen R."/>
            <person name="Joshi C."/>
            <person name="Kangasjaervi J."/>
            <person name="Karlsson J."/>
            <person name="Kelleher C."/>
            <person name="Kirkpatrick R."/>
            <person name="Kirst M."/>
            <person name="Kohler A."/>
            <person name="Kalluri U."/>
            <person name="Larimer F."/>
            <person name="Leebens-Mack J."/>
            <person name="Leple J.-C."/>
            <person name="Locascio P."/>
            <person name="Lou Y."/>
            <person name="Lucas S."/>
            <person name="Martin F."/>
            <person name="Montanini B."/>
            <person name="Napoli C."/>
            <person name="Nelson D.R."/>
            <person name="Nelson C."/>
            <person name="Nieminen K."/>
            <person name="Nilsson O."/>
            <person name="Pereda V."/>
            <person name="Peter G."/>
            <person name="Philippe R."/>
            <person name="Pilate G."/>
            <person name="Poliakov A."/>
            <person name="Razumovskaya J."/>
            <person name="Richardson P."/>
            <person name="Rinaldi C."/>
            <person name="Ritland K."/>
            <person name="Rouze P."/>
            <person name="Ryaboy D."/>
            <person name="Schmutz J."/>
            <person name="Schrader J."/>
            <person name="Segerman B."/>
            <person name="Shin H."/>
            <person name="Siddiqui A."/>
            <person name="Sterky F."/>
            <person name="Terry A."/>
            <person name="Tsai C.-J."/>
            <person name="Uberbacher E."/>
            <person name="Unneberg P."/>
            <person name="Vahala J."/>
            <person name="Wall K."/>
            <person name="Wessler S."/>
            <person name="Yang G."/>
            <person name="Yin T."/>
            <person name="Douglas C."/>
            <person name="Marra M."/>
            <person name="Sandberg G."/>
            <person name="Van de Peer Y."/>
            <person name="Rokhsar D.S."/>
        </authorList>
    </citation>
    <scope>NUCLEOTIDE SEQUENCE [LARGE SCALE GENOMIC DNA]</scope>
    <source>
        <strain>cv. Nisqually</strain>
    </source>
</reference>
<accession>A4GYR2</accession>
<evidence type="ECO:0000250" key="1"/>
<evidence type="ECO:0000256" key="2">
    <source>
        <dbReference type="SAM" id="MobiDB-lite"/>
    </source>
</evidence>
<evidence type="ECO:0000305" key="3"/>
<protein>
    <recommendedName>
        <fullName evidence="3">Small ribosomal subunit protein uS4c</fullName>
    </recommendedName>
    <alternativeName>
        <fullName>30S ribosomal protein S4, chloroplastic</fullName>
    </alternativeName>
</protein>
<sequence length="201" mass="23498">MSRYRGPRFKKIRRLGALPGLTSKRPRAGSDLRNQSRAGKKSQYRIRLEEKQKLRFHYGLTERQLLKYVRIAAKAKGSTGQVLLQLLEMRLDNILFRLGMASTIPRARQLVNHRHILVNGRIVDIPSYRCKPRDIITAKDEQKSRVMIQNSLDSFPQEELPKHLTLHPFQYKGLVNHIIDSKWIGLKINELLVVEYYSRQT</sequence>
<comment type="function">
    <text evidence="1">One of the primary rRNA binding proteins, it binds directly to 16S rRNA where it nucleates assembly of the body of the 30S subunit.</text>
</comment>
<comment type="function">
    <text evidence="1">With S5 and S12 plays an important role in translational accuracy.</text>
</comment>
<comment type="subunit">
    <text evidence="1">Part of the 30S ribosomal subunit. Contacts protein S5. The interaction surface between S4 and S5 is involved in control of translational fidelity (By similarity).</text>
</comment>
<comment type="subcellular location">
    <subcellularLocation>
        <location>Plastid</location>
        <location>Chloroplast</location>
    </subcellularLocation>
</comment>
<comment type="similarity">
    <text evidence="3">Belongs to the universal ribosomal protein uS4 family.</text>
</comment>
<feature type="chain" id="PRO_0000293436" description="Small ribosomal subunit protein uS4c">
    <location>
        <begin position="1"/>
        <end position="201"/>
    </location>
</feature>
<feature type="domain" description="S4 RNA-binding">
    <location>
        <begin position="89"/>
        <end position="150"/>
    </location>
</feature>
<feature type="region of interest" description="Disordered" evidence="2">
    <location>
        <begin position="20"/>
        <end position="43"/>
    </location>
</feature>
<name>RR4_POPTR</name>